<sequence>MAYSVQKSRLAKVAGVSLVLLLAACSSDSRYKRQVSGDEAYLEAAPLAELHAPAGMILPVTSGDYAIPVTNGSGAVGKALDIRPPAQPLALVSGARTQFTGDTASLLVENGRGNTLWPQVVSVLQAKNYTITQRDDAGQTLTTDWVQWNRLDEDEQYRGRYQISVKPQGYQQAVTVKLLNLEQAGKPVADAASMQRYSTEMMNVISAGLDKSATDAANAAQNRASTTMDVQSAADDTGLPMLVVRGPFNVVWQRLPAALEKVGMKVTDSTRSQGNMAVTYKPLSDSDWQELGASDPGLASGDYKLQVGDLDNRSSLQFIDPKGHTLTQSQNDALVAVFQAAFSK</sequence>
<reference key="1">
    <citation type="journal article" date="1991" name="J. Bacteriol.">
        <title>A gene for a new lipoprotein in the dapA-purC interval of the Escherichia coli chromosome.</title>
        <authorList>
            <person name="Bouvier J."/>
            <person name="Pugsley A.P."/>
            <person name="Stragier P."/>
        </authorList>
    </citation>
    <scope>NUCLEOTIDE SEQUENCE [GENOMIC DNA]</scope>
    <scope>DIACYLGLYCEROL AT CYS-25</scope>
    <scope>PALMITOYLATION AT CYS-25</scope>
    <source>
        <strain>K12</strain>
    </source>
</reference>
<reference key="2">
    <citation type="journal article" date="1990" name="J. Bacteriol.">
        <title>DNA sequence of the purC gene encoding 5'-phosphoribosyl-5-aminoimidazole-4-N-succinocarboxamide synthetase and organization of the dapA-purC region of Escherichia coli K-12.</title>
        <authorList>
            <person name="Tiedemann A.A."/>
            <person name="Demarini D.J."/>
            <person name="Parker J."/>
            <person name="Smith J.M."/>
        </authorList>
    </citation>
    <scope>NUCLEOTIDE SEQUENCE [GENOMIC DNA]</scope>
    <source>
        <strain>K12</strain>
    </source>
</reference>
<reference key="3">
    <citation type="journal article" date="1997" name="DNA Res.">
        <title>Construction of a contiguous 874-kb sequence of the Escherichia coli-K12 genome corresponding to 50.0-68.8 min on the linkage map and analysis of its sequence features.</title>
        <authorList>
            <person name="Yamamoto Y."/>
            <person name="Aiba H."/>
            <person name="Baba T."/>
            <person name="Hayashi K."/>
            <person name="Inada T."/>
            <person name="Isono K."/>
            <person name="Itoh T."/>
            <person name="Kimura S."/>
            <person name="Kitagawa M."/>
            <person name="Makino K."/>
            <person name="Miki T."/>
            <person name="Mitsuhashi N."/>
            <person name="Mizobuchi K."/>
            <person name="Mori H."/>
            <person name="Nakade S."/>
            <person name="Nakamura Y."/>
            <person name="Nashimoto H."/>
            <person name="Oshima T."/>
            <person name="Oyama S."/>
            <person name="Saito N."/>
            <person name="Sampei G."/>
            <person name="Satoh Y."/>
            <person name="Sivasundaram S."/>
            <person name="Tagami H."/>
            <person name="Takahashi H."/>
            <person name="Takeda J."/>
            <person name="Takemoto K."/>
            <person name="Uehara K."/>
            <person name="Wada C."/>
            <person name="Yamagata S."/>
            <person name="Horiuchi T."/>
        </authorList>
    </citation>
    <scope>NUCLEOTIDE SEQUENCE [LARGE SCALE GENOMIC DNA]</scope>
    <source>
        <strain>K12 / W3110 / ATCC 27325 / DSM 5911</strain>
    </source>
</reference>
<reference key="4">
    <citation type="journal article" date="1997" name="Science">
        <title>The complete genome sequence of Escherichia coli K-12.</title>
        <authorList>
            <person name="Blattner F.R."/>
            <person name="Plunkett G. III"/>
            <person name="Bloch C.A."/>
            <person name="Perna N.T."/>
            <person name="Burland V."/>
            <person name="Riley M."/>
            <person name="Collado-Vides J."/>
            <person name="Glasner J.D."/>
            <person name="Rode C.K."/>
            <person name="Mayhew G.F."/>
            <person name="Gregor J."/>
            <person name="Davis N.W."/>
            <person name="Kirkpatrick H.A."/>
            <person name="Goeden M.A."/>
            <person name="Rose D.J."/>
            <person name="Mau B."/>
            <person name="Shao Y."/>
        </authorList>
    </citation>
    <scope>NUCLEOTIDE SEQUENCE [LARGE SCALE GENOMIC DNA]</scope>
    <source>
        <strain>K12 / MG1655 / ATCC 47076</strain>
    </source>
</reference>
<reference key="5">
    <citation type="journal article" date="2006" name="Mol. Syst. Biol.">
        <title>Highly accurate genome sequences of Escherichia coli K-12 strains MG1655 and W3110.</title>
        <authorList>
            <person name="Hayashi K."/>
            <person name="Morooka N."/>
            <person name="Yamamoto Y."/>
            <person name="Fujita K."/>
            <person name="Isono K."/>
            <person name="Choi S."/>
            <person name="Ohtsubo E."/>
            <person name="Baba T."/>
            <person name="Wanner B.L."/>
            <person name="Mori H."/>
            <person name="Horiuchi T."/>
        </authorList>
    </citation>
    <scope>NUCLEOTIDE SEQUENCE [LARGE SCALE GENOMIC DNA]</scope>
    <source>
        <strain>K12 / W3110 / ATCC 27325 / DSM 5911</strain>
    </source>
</reference>
<reference key="6">
    <citation type="journal article" date="2005" name="Cell">
        <title>Identification of a multicomponent complex required for outer membrane biogenesis in Escherichia coli.</title>
        <authorList>
            <person name="Wu T."/>
            <person name="Malinverni J."/>
            <person name="Ruiz N."/>
            <person name="Kim S."/>
            <person name="Silhavy T.J."/>
            <person name="Kahne D."/>
        </authorList>
    </citation>
    <scope>SUBUNIT</scope>
    <scope>IDENTIFICATION BY MASS SPECTROMETRY</scope>
    <source>
        <strain>K12</strain>
    </source>
</reference>
<reference key="7">
    <citation type="journal article" date="2005" name="J. Biol. Chem.">
        <title>Protein complexes of the Escherichia coli cell envelope.</title>
        <authorList>
            <person name="Stenberg F."/>
            <person name="Chovanec P."/>
            <person name="Maslen S.L."/>
            <person name="Robinson C.V."/>
            <person name="Ilag L."/>
            <person name="von Heijne G."/>
            <person name="Daley D.O."/>
        </authorList>
    </citation>
    <scope>SUBUNIT</scope>
    <scope>SUBCELLULAR LOCATION</scope>
    <source>
        <strain>BL21-DE3</strain>
    </source>
</reference>
<reference key="8">
    <citation type="journal article" date="2006" name="Mol. Microbiol.">
        <title>YfiO stabilizes the YaeT complex and is essential for outer membrane protein assembly in Escherichia coli.</title>
        <authorList>
            <person name="Malinverni J.C."/>
            <person name="Werner J."/>
            <person name="Kim S."/>
            <person name="Sklar J.G."/>
            <person name="Kahne D."/>
            <person name="Misra R."/>
            <person name="Silhavy T.J."/>
        </authorList>
    </citation>
    <scope>SUBUNIT</scope>
    <scope>INTERACTION WITH BAMD</scope>
    <source>
        <strain>K12</strain>
    </source>
</reference>
<reference key="9">
    <citation type="journal article" date="2009" name="Biomol. NMR. Assign.">
        <title>Secondary structure and (1)H, (13)C and (15)N backbone resonance assignments of BamC, a component of the outer membrane protein assembly machinery in Escherichia coli.</title>
        <authorList>
            <person name="Knowles T.J."/>
            <person name="McClelland D.M."/>
            <person name="Rajesh S."/>
            <person name="Henderson I.R."/>
            <person name="Overduin M."/>
        </authorList>
    </citation>
    <scope>SECONDARY STRUCTURE</scope>
</reference>
<reference key="10">
    <citation type="journal article" date="2010" name="Science">
        <title>Reconstitution of outer membrane protein assembly from purified components.</title>
        <authorList>
            <person name="Hagan C.L."/>
            <person name="Kim S."/>
            <person name="Kahne D."/>
        </authorList>
    </citation>
    <scope>FUNCTION</scope>
    <scope>SUBUNIT</scope>
</reference>
<reference key="11">
    <citation type="journal article" date="2011" name="Biochemistry">
        <title>The reconstituted Escherichia coli Bam complex catalyzes multiple rounds of beta-barrel assembly.</title>
        <authorList>
            <person name="Hagan C.L."/>
            <person name="Kahne D."/>
        </authorList>
    </citation>
    <scope>FUNCTION</scope>
    <scope>SUBUNIT</scope>
</reference>
<reference key="12">
    <citation type="journal article" date="2012" name="J. Bacteriol.">
        <title>BamE modulates the Escherichia coli beta-barrel assembly machine component BamA.</title>
        <authorList>
            <person name="Rigel N.W."/>
            <person name="Schwalm J."/>
            <person name="Ricci D.P."/>
            <person name="Silhavy T.J."/>
        </authorList>
    </citation>
    <scope>FUNCTION</scope>
    <source>
        <strain>K12 / MC4100 / ATCC 35695 / DSM 6574</strain>
    </source>
</reference>
<reference key="13">
    <citation type="journal article" date="2010" name="Acta Crystallogr. F">
        <title>Crystallization and preliminary X-ray data collection of the Escherichia coli lipoproteins BamC, BamD and BamE.</title>
        <authorList>
            <person name="Albrecht R."/>
            <person name="Zeth K."/>
        </authorList>
    </citation>
    <scope>CRYSTALLIZATION</scope>
</reference>
<reference evidence="22" key="14">
    <citation type="journal article" date="2011" name="Acta Crystallogr. F">
        <title>Crystallographic analysis of the C-terminal domain of the Escherichia coli lipoprotein BamC.</title>
        <authorList>
            <person name="Kim K.H."/>
            <person name="Aulakh S."/>
            <person name="Tan W."/>
            <person name="Paetzel M."/>
        </authorList>
    </citation>
    <scope>X-RAY CRYSTALLOGRAPHY (1.50 ANGSTROMS) OF 224-343</scope>
    <scope>DOMAIN</scope>
</reference>
<reference evidence="20 21" key="15">
    <citation type="journal article" date="2011" name="J. Biol. Chem.">
        <title>Structural basis of outer membrane protein biogenesis in bacteria.</title>
        <authorList>
            <person name="Albrecht R."/>
            <person name="Zeth K."/>
        </authorList>
    </citation>
    <scope>X-RAY CRYSTALLOGRAPHY (1.25 ANGSTROMS) OF 226-344</scope>
</reference>
<reference evidence="23" key="16">
    <citation type="journal article" date="2011" name="J. Biol. Chem.">
        <title>Crystal structure of beta-barrel assembly machinery BamCD protein complex.</title>
        <authorList>
            <person name="Kim K.H."/>
            <person name="Aulakh S."/>
            <person name="Paetzel M."/>
        </authorList>
    </citation>
    <scope>X-RAY CRYSTALLOGRAPHY (2.90 ANGSTROMS) OF 26-344</scope>
    <scope>INTERACTION WITH BAMD</scope>
    <scope>DOMAIN</scope>
    <source>
        <strain>K12</strain>
    </source>
</reference>
<reference evidence="18 19" key="17">
    <citation type="journal article" date="2011" name="J. Mol. Biol.">
        <title>Structure of the BamC two-domain protein obtained by Rosetta with a limited NMR data set.</title>
        <authorList>
            <person name="Warner L.R."/>
            <person name="Varga K."/>
            <person name="Lange O.F."/>
            <person name="Baker S.L."/>
            <person name="Baker D."/>
            <person name="Sousa M.C."/>
            <person name="Pardi A."/>
        </authorList>
    </citation>
    <scope>STRUCTURE BY NMR OF 101-344</scope>
    <scope>DOMAIN</scope>
</reference>
<reference evidence="28" key="18">
    <citation type="journal article" date="2016" name="Nat. Commun.">
        <title>Lateral opening in the intact beta-barrel assembly machinery captured by cryo-EM.</title>
        <authorList>
            <person name="Iadanza M.G."/>
            <person name="Higgins A.J."/>
            <person name="Schiffrin B."/>
            <person name="Calabrese A.N."/>
            <person name="Brockwell D.J."/>
            <person name="Ashcroft A.E."/>
            <person name="Radford S.E."/>
            <person name="Ranson N.A."/>
        </authorList>
    </citation>
    <scope>STRUCTURE BY ELECTRON MICROSCOPY (4.90 ANGSTROMS) OF 25-189 IN LATERAL OPEN BAM COMPLEX</scope>
    <scope>FUNCTION</scope>
    <scope>REACTION MECHANISM</scope>
    <scope>SUBUNIT</scope>
    <scope>MASS SPECTROMETRY</scope>
    <scope>LIPIDATION</scope>
</reference>
<reference evidence="24" key="19">
    <citation type="journal article" date="2016" name="Nat. Struct. Mol. Biol.">
        <title>Structure of the BAM complex and its implications for biogenesis of outer-membrane proteins.</title>
        <authorList>
            <person name="Han L."/>
            <person name="Zheng J."/>
            <person name="Wang Y."/>
            <person name="Yang X."/>
            <person name="Liu Y."/>
            <person name="Sun C."/>
            <person name="Cao B."/>
            <person name="Zhou H."/>
            <person name="Ni D."/>
            <person name="Lou J."/>
            <person name="Zhao Y."/>
            <person name="Huang Y."/>
        </authorList>
    </citation>
    <scope>X-RAY CRYSTALLOGRAPHY (3.56 ANGSTROMS) OF 33-88 IN LATERAL CLOSED BAM COMPLEX</scope>
    <scope>SUBUNIT</scope>
    <scope>SUBCELLULAR LOCATION</scope>
    <source>
        <strain>K12 / MG1655 / ATCC 47076</strain>
    </source>
</reference>
<reference evidence="25 26" key="20">
    <citation type="journal article" date="2016" name="Nature">
        <title>Structural basis of outer membrane protein insertion by the BAM complex.</title>
        <authorList>
            <person name="Gu Y."/>
            <person name="Li H."/>
            <person name="Dong H."/>
            <person name="Zeng Y."/>
            <person name="Zhang Z."/>
            <person name="Paterson N.G."/>
            <person name="Stansfeld P.J."/>
            <person name="Wang Z."/>
            <person name="Zhang Y."/>
            <person name="Wang W."/>
            <person name="Dong C."/>
        </authorList>
    </citation>
    <scope>X-RAY CRYSTALLOGRAPHY (2.90 ANGSTROMS) IN LATERAL CLOSED BAM COMPLEX AND LATERAL OPEN BAMACDE SUBCOMPLEX</scope>
    <scope>SUBUNIT</scope>
    <scope>SUBCELLULAR LOCATION</scope>
</reference>
<reference evidence="27" key="21">
    <citation type="journal article" date="2016" name="Science">
        <title>The structure of the beta-barrel assembly machinery complex.</title>
        <authorList>
            <person name="Bakelar J."/>
            <person name="Buchanan S.K."/>
            <person name="Noinaj N."/>
        </authorList>
    </citation>
    <scope>X-RAY CRYSTALLOGRAPHY (3.39 ANGSTROMS) OF 25-344 OF LATERAL OPEN BAMACDE COMPLEX</scope>
    <scope>SUBUNIT</scope>
</reference>
<accession>P0A903</accession>
<accession>P21167</accession>
<accession>P76564</accession>
<evidence type="ECO:0000255" key="1">
    <source>
        <dbReference type="HAMAP-Rule" id="MF_00924"/>
    </source>
</evidence>
<evidence type="ECO:0000269" key="2">
    <source>
    </source>
</evidence>
<evidence type="ECO:0000269" key="3">
    <source>
    </source>
</evidence>
<evidence type="ECO:0000269" key="4">
    <source>
    </source>
</evidence>
<evidence type="ECO:0000269" key="5">
    <source>
    </source>
</evidence>
<evidence type="ECO:0000269" key="6">
    <source>
    </source>
</evidence>
<evidence type="ECO:0000269" key="7">
    <source>
    </source>
</evidence>
<evidence type="ECO:0000269" key="8">
    <source>
    </source>
</evidence>
<evidence type="ECO:0000269" key="9">
    <source>
    </source>
</evidence>
<evidence type="ECO:0000269" key="10">
    <source>
    </source>
</evidence>
<evidence type="ECO:0000269" key="11">
    <source>
    </source>
</evidence>
<evidence type="ECO:0000269" key="12">
    <source>
    </source>
</evidence>
<evidence type="ECO:0000269" key="13">
    <source>
    </source>
</evidence>
<evidence type="ECO:0000269" key="14">
    <source>
    </source>
</evidence>
<evidence type="ECO:0000269" key="15">
    <source>
    </source>
</evidence>
<evidence type="ECO:0000305" key="16"/>
<evidence type="ECO:0000305" key="17">
    <source>
    </source>
</evidence>
<evidence type="ECO:0007744" key="18">
    <source>
        <dbReference type="PDB" id="2LAE"/>
    </source>
</evidence>
<evidence type="ECO:0007744" key="19">
    <source>
        <dbReference type="PDB" id="2LAF"/>
    </source>
</evidence>
<evidence type="ECO:0007744" key="20">
    <source>
        <dbReference type="PDB" id="2YH5"/>
    </source>
</evidence>
<evidence type="ECO:0007744" key="21">
    <source>
        <dbReference type="PDB" id="2YH6"/>
    </source>
</evidence>
<evidence type="ECO:0007744" key="22">
    <source>
        <dbReference type="PDB" id="3SNS"/>
    </source>
</evidence>
<evidence type="ECO:0007744" key="23">
    <source>
        <dbReference type="PDB" id="3TGO"/>
    </source>
</evidence>
<evidence type="ECO:0007744" key="24">
    <source>
        <dbReference type="PDB" id="5AYW"/>
    </source>
</evidence>
<evidence type="ECO:0007744" key="25">
    <source>
        <dbReference type="PDB" id="5D0O"/>
    </source>
</evidence>
<evidence type="ECO:0007744" key="26">
    <source>
        <dbReference type="PDB" id="5D0Q"/>
    </source>
</evidence>
<evidence type="ECO:0007744" key="27">
    <source>
        <dbReference type="PDB" id="5EKQ"/>
    </source>
</evidence>
<evidence type="ECO:0007744" key="28">
    <source>
        <dbReference type="PDB" id="5LJO"/>
    </source>
</evidence>
<evidence type="ECO:0007829" key="29">
    <source>
        <dbReference type="PDB" id="2LAF"/>
    </source>
</evidence>
<evidence type="ECO:0007829" key="30">
    <source>
        <dbReference type="PDB" id="2YH5"/>
    </source>
</evidence>
<evidence type="ECO:0007829" key="31">
    <source>
        <dbReference type="PDB" id="2YH6"/>
    </source>
</evidence>
<evidence type="ECO:0007829" key="32">
    <source>
        <dbReference type="PDB" id="3TGO"/>
    </source>
</evidence>
<evidence type="ECO:0007829" key="33">
    <source>
        <dbReference type="PDB" id="5D0O"/>
    </source>
</evidence>
<evidence type="ECO:0007829" key="34">
    <source>
        <dbReference type="PDB" id="5D0Q"/>
    </source>
</evidence>
<evidence type="ECO:0007829" key="35">
    <source>
        <dbReference type="PDB" id="6LYQ"/>
    </source>
</evidence>
<evidence type="ECO:0007829" key="36">
    <source>
        <dbReference type="PDB" id="8BWC"/>
    </source>
</evidence>
<keyword id="KW-0002">3D-structure</keyword>
<keyword id="KW-0998">Cell outer membrane</keyword>
<keyword id="KW-0449">Lipoprotein</keyword>
<keyword id="KW-0472">Membrane</keyword>
<keyword id="KW-0564">Palmitate</keyword>
<keyword id="KW-1185">Reference proteome</keyword>
<keyword id="KW-0732">Signal</keyword>
<proteinExistence type="evidence at protein level"/>
<organism>
    <name type="scientific">Escherichia coli (strain K12)</name>
    <dbReference type="NCBI Taxonomy" id="83333"/>
    <lineage>
        <taxon>Bacteria</taxon>
        <taxon>Pseudomonadati</taxon>
        <taxon>Pseudomonadota</taxon>
        <taxon>Gammaproteobacteria</taxon>
        <taxon>Enterobacterales</taxon>
        <taxon>Enterobacteriaceae</taxon>
        <taxon>Escherichia</taxon>
    </lineage>
</organism>
<comment type="function">
    <text evidence="6 8 11 12 13 14 15">Part of the outer membrane protein assembly complex (Bam), which is involved in assembly and insertion of beta-barrel proteins into the outer membrane. Nonessential member of the complex that stabilizes the interaction between the essential proteins BamA and BamD. Efficient substrate folding and insertion into the outer membrane requires all 5 subunits (PubMed:20378773, PubMed:21823654, PubMed:27686148). A lateral gate may open between the first and last strands of the BamA beta-barrel that allows substrate to insert into the outer membrane; comparison of the structures of complete and nearly complete Bam complexes show there is considerable movement of all 5 proteins (PubMed:26744406, PubMed:26900875, PubMed:26901871, PubMed:27686148).</text>
</comment>
<comment type="subunit">
    <text evidence="2 3 4 6 8 12 13 14 15">Part of the Bam complex, which is composed of the outer membrane protein BamA, and four lipoproteins BamB, BamC, BamD and BamE. Forms a subcomplex with BamD and BamE. The Bam complex has the shape of a hat, with the BamA beta-barrel crown in the outer membrane and the periplasmic brim formed by the BamA POTRA domains and the 4 lipoproteins (PubMed:26744406, PubMed:26900875, PubMed:26901871, PubMed:27686148).</text>
</comment>
<comment type="interaction">
    <interactant intactId="EBI-1129043">
        <id>P0A903</id>
    </interactant>
    <interactant intactId="EBI-1129043">
        <id>P0A903</id>
        <label>bamC</label>
    </interactant>
    <organismsDiffer>false</organismsDiffer>
    <experiments>2</experiments>
</comment>
<comment type="interaction">
    <interactant intactId="EBI-1129043">
        <id>P0A903</id>
    </interactant>
    <interactant intactId="EBI-1128087">
        <id>P0AC02</id>
        <label>bamD</label>
    </interactant>
    <organismsDiffer>false</organismsDiffer>
    <experiments>4</experiments>
</comment>
<comment type="subcellular location">
    <subcellularLocation>
        <location evidence="1 3 13 14">Cell outer membrane</location>
        <topology evidence="1 3 15">Lipid-anchor</topology>
    </subcellularLocation>
</comment>
<comment type="domain">
    <text evidence="7 9 10 12 13 14 15">Contains two well-defined domains connected by a flexible linker. The C-terminal domain may serve as an important protein-binding surface for interaction with other Bam components or substrates. In addition, contains a long unstructured N-terminal region, which is required to stabilize the BamCD complex. Only the N-terminus of this protein is observed in the Bam complex in X-ray or EM structures, most of the protein must be highly mobile (PubMed:26744406, PubMed:26900875, PubMed:26901871, PubMed:27686148).</text>
</comment>
<comment type="mass spectrometry">
    <text>With 3 palmitic acid (C16) acyl chains.</text>
</comment>
<comment type="mass spectrometry">
    <text>With 2 palmitic (C16) and 1 stearic (C18) acid acyl chains.</text>
</comment>
<comment type="similarity">
    <text evidence="1">Belongs to the BamC family.</text>
</comment>
<comment type="sequence caution" evidence="16">
    <conflict type="frameshift">
        <sequence resource="EMBL" id="M33928"/>
    </conflict>
</comment>
<gene>
    <name evidence="1" type="primary">bamC</name>
    <name type="synonym">dapX</name>
    <name type="synonym">nlpB</name>
    <name type="ordered locus">b2477</name>
    <name type="ordered locus">JW2462</name>
</gene>
<protein>
    <recommendedName>
        <fullName evidence="1">Outer membrane protein assembly factor BamC</fullName>
    </recommendedName>
</protein>
<name>BAMC_ECOLI</name>
<dbReference type="EMBL" id="X57402">
    <property type="protein sequence ID" value="CAA40661.1"/>
    <property type="molecule type" value="Genomic_DNA"/>
</dbReference>
<dbReference type="EMBL" id="M33928">
    <property type="status" value="NOT_ANNOTATED_CDS"/>
    <property type="molecule type" value="Genomic_DNA"/>
</dbReference>
<dbReference type="EMBL" id="U00096">
    <property type="protein sequence ID" value="AAC75530.2"/>
    <property type="molecule type" value="Genomic_DNA"/>
</dbReference>
<dbReference type="EMBL" id="AP009048">
    <property type="protein sequence ID" value="BAA16354.1"/>
    <property type="molecule type" value="Genomic_DNA"/>
</dbReference>
<dbReference type="PIR" id="D65023">
    <property type="entry name" value="D65023"/>
</dbReference>
<dbReference type="RefSeq" id="NP_416972.4">
    <property type="nucleotide sequence ID" value="NC_000913.3"/>
</dbReference>
<dbReference type="RefSeq" id="WP_001297320.1">
    <property type="nucleotide sequence ID" value="NZ_STEB01000011.1"/>
</dbReference>
<dbReference type="PDB" id="2LAE">
    <property type="method" value="NMR"/>
    <property type="chains" value="A=101-344"/>
</dbReference>
<dbReference type="PDB" id="2LAF">
    <property type="method" value="NMR"/>
    <property type="chains" value="A=101-344"/>
</dbReference>
<dbReference type="PDB" id="2YH5">
    <property type="method" value="X-ray"/>
    <property type="resolution" value="1.25 A"/>
    <property type="chains" value="A=226-344"/>
</dbReference>
<dbReference type="PDB" id="2YH6">
    <property type="method" value="X-ray"/>
    <property type="resolution" value="1.55 A"/>
    <property type="chains" value="A/B/C/D=101-212"/>
</dbReference>
<dbReference type="PDB" id="3SNS">
    <property type="method" value="X-ray"/>
    <property type="resolution" value="1.50 A"/>
    <property type="chains" value="A=224-343"/>
</dbReference>
<dbReference type="PDB" id="3TGO">
    <property type="method" value="X-ray"/>
    <property type="resolution" value="2.90 A"/>
    <property type="chains" value="C/D=26-344"/>
</dbReference>
<dbReference type="PDB" id="5AYW">
    <property type="method" value="X-ray"/>
    <property type="resolution" value="3.56 A"/>
    <property type="chains" value="C=33-88"/>
</dbReference>
<dbReference type="PDB" id="5D0O">
    <property type="method" value="X-ray"/>
    <property type="resolution" value="2.90 A"/>
    <property type="chains" value="C=1-344"/>
</dbReference>
<dbReference type="PDB" id="5D0Q">
    <property type="method" value="X-ray"/>
    <property type="resolution" value="3.50 A"/>
    <property type="chains" value="C/G=1-344"/>
</dbReference>
<dbReference type="PDB" id="5EKQ">
    <property type="method" value="X-ray"/>
    <property type="resolution" value="3.39 A"/>
    <property type="chains" value="C=25-344"/>
</dbReference>
<dbReference type="PDB" id="5LJO">
    <property type="method" value="EM"/>
    <property type="resolution" value="4.90 A"/>
    <property type="chains" value="C=25-189"/>
</dbReference>
<dbReference type="PDB" id="6LYQ">
    <property type="method" value="X-ray"/>
    <property type="resolution" value="3.19 A"/>
    <property type="chains" value="C=1-344"/>
</dbReference>
<dbReference type="PDB" id="6LYR">
    <property type="method" value="X-ray"/>
    <property type="resolution" value="3.28 A"/>
    <property type="chains" value="C=1-344"/>
</dbReference>
<dbReference type="PDB" id="6LYS">
    <property type="method" value="X-ray"/>
    <property type="resolution" value="3.05 A"/>
    <property type="chains" value="C=1-344"/>
</dbReference>
<dbReference type="PDB" id="6LYU">
    <property type="method" value="EM"/>
    <property type="resolution" value="4.20 A"/>
    <property type="chains" value="C=1-344"/>
</dbReference>
<dbReference type="PDB" id="6SMX">
    <property type="method" value="EM"/>
    <property type="resolution" value="6.65 A"/>
    <property type="chains" value="C=25-83"/>
</dbReference>
<dbReference type="PDB" id="6SN0">
    <property type="method" value="EM"/>
    <property type="resolution" value="10.80 A"/>
    <property type="chains" value="C=25-83"/>
</dbReference>
<dbReference type="PDB" id="6SN2">
    <property type="method" value="EM"/>
    <property type="resolution" value="9.50 A"/>
    <property type="chains" value="C=25-83"/>
</dbReference>
<dbReference type="PDB" id="6SN3">
    <property type="method" value="EM"/>
    <property type="resolution" value="8.40 A"/>
    <property type="chains" value="C=25-83"/>
</dbReference>
<dbReference type="PDB" id="6SN4">
    <property type="method" value="EM"/>
    <property type="resolution" value="9.50 A"/>
    <property type="chains" value="C=25-83"/>
</dbReference>
<dbReference type="PDB" id="6SN5">
    <property type="method" value="EM"/>
    <property type="resolution" value="9.80 A"/>
    <property type="chains" value="C=25-83"/>
</dbReference>
<dbReference type="PDB" id="6SN7">
    <property type="method" value="EM"/>
    <property type="resolution" value="8.90 A"/>
    <property type="chains" value="C=25-83"/>
</dbReference>
<dbReference type="PDB" id="6SN8">
    <property type="method" value="EM"/>
    <property type="resolution" value="8.40 A"/>
    <property type="chains" value="C=25-83"/>
</dbReference>
<dbReference type="PDB" id="6SN9">
    <property type="method" value="EM"/>
    <property type="resolution" value="9.80 A"/>
    <property type="chains" value="C=25-83"/>
</dbReference>
<dbReference type="PDB" id="6SO7">
    <property type="method" value="EM"/>
    <property type="resolution" value="10.50 A"/>
    <property type="chains" value="C=25-83"/>
</dbReference>
<dbReference type="PDB" id="6SO8">
    <property type="method" value="EM"/>
    <property type="resolution" value="9.80 A"/>
    <property type="chains" value="C=25-83"/>
</dbReference>
<dbReference type="PDB" id="6SOA">
    <property type="method" value="EM"/>
    <property type="resolution" value="10.80 A"/>
    <property type="chains" value="C=25-83"/>
</dbReference>
<dbReference type="PDB" id="6SOB">
    <property type="method" value="EM"/>
    <property type="resolution" value="8.50 A"/>
    <property type="chains" value="C=25-83"/>
</dbReference>
<dbReference type="PDB" id="6SOC">
    <property type="method" value="EM"/>
    <property type="resolution" value="9.00 A"/>
    <property type="chains" value="C=25-83"/>
</dbReference>
<dbReference type="PDB" id="6SOG">
    <property type="method" value="EM"/>
    <property type="resolution" value="8.30 A"/>
    <property type="chains" value="C=25-83"/>
</dbReference>
<dbReference type="PDB" id="6SOH">
    <property type="method" value="EM"/>
    <property type="resolution" value="9.50 A"/>
    <property type="chains" value="C=25-83"/>
</dbReference>
<dbReference type="PDB" id="6SOJ">
    <property type="method" value="EM"/>
    <property type="resolution" value="10.40 A"/>
    <property type="chains" value="C=25-83"/>
</dbReference>
<dbReference type="PDB" id="6V05">
    <property type="method" value="EM"/>
    <property type="resolution" value="4.10 A"/>
    <property type="chains" value="C=1-344"/>
</dbReference>
<dbReference type="PDB" id="7BNQ">
    <property type="method" value="EM"/>
    <property type="resolution" value="4.10 A"/>
    <property type="chains" value="C=1-344"/>
</dbReference>
<dbReference type="PDB" id="7NBX">
    <property type="method" value="EM"/>
    <property type="resolution" value="4.80 A"/>
    <property type="chains" value="C=1-344"/>
</dbReference>
<dbReference type="PDB" id="7NCS">
    <property type="method" value="EM"/>
    <property type="resolution" value="7.10 A"/>
    <property type="chains" value="C=1-344"/>
</dbReference>
<dbReference type="PDB" id="7ND0">
    <property type="method" value="EM"/>
    <property type="resolution" value="5.20 A"/>
    <property type="chains" value="C=1-344"/>
</dbReference>
<dbReference type="PDB" id="7NRI">
    <property type="method" value="EM"/>
    <property type="resolution" value="3.03 A"/>
    <property type="chains" value="C=25-344"/>
</dbReference>
<dbReference type="PDB" id="7R1W">
    <property type="method" value="EM"/>
    <property type="resolution" value="3.60 A"/>
    <property type="chains" value="C=1-344"/>
</dbReference>
<dbReference type="PDB" id="7RI4">
    <property type="method" value="EM"/>
    <property type="resolution" value="3.40 A"/>
    <property type="chains" value="C=1-344"/>
</dbReference>
<dbReference type="PDB" id="7RI5">
    <property type="method" value="EM"/>
    <property type="resolution" value="4.00 A"/>
    <property type="chains" value="C=1-344"/>
</dbReference>
<dbReference type="PDB" id="7RI6">
    <property type="method" value="EM"/>
    <property type="resolution" value="5.90 A"/>
    <property type="chains" value="C=1-344"/>
</dbReference>
<dbReference type="PDB" id="7RI7">
    <property type="method" value="EM"/>
    <property type="resolution" value="8.00 A"/>
    <property type="chains" value="C=1-344"/>
</dbReference>
<dbReference type="PDB" id="7RI9">
    <property type="method" value="EM"/>
    <property type="resolution" value="6.90 A"/>
    <property type="chains" value="C=1-344"/>
</dbReference>
<dbReference type="PDB" id="7RJ5">
    <property type="method" value="EM"/>
    <property type="resolution" value="7.00 A"/>
    <property type="chains" value="C=1-344"/>
</dbReference>
<dbReference type="PDB" id="7TSZ">
    <property type="method" value="EM"/>
    <property type="resolution" value="4.50 A"/>
    <property type="chains" value="C=25-344"/>
</dbReference>
<dbReference type="PDB" id="7TT0">
    <property type="method" value="EM"/>
    <property type="resolution" value="4.30 A"/>
    <property type="chains" value="C=25-344"/>
</dbReference>
<dbReference type="PDB" id="7TT1">
    <property type="method" value="EM"/>
    <property type="resolution" value="4.30 A"/>
    <property type="chains" value="C=25-344"/>
</dbReference>
<dbReference type="PDB" id="7TT2">
    <property type="method" value="EM"/>
    <property type="resolution" value="4.20 A"/>
    <property type="chains" value="C=25-344"/>
</dbReference>
<dbReference type="PDB" id="7TT3">
    <property type="method" value="EM"/>
    <property type="resolution" value="4.30 A"/>
    <property type="chains" value="C=25-344"/>
</dbReference>
<dbReference type="PDB" id="7TT4">
    <property type="method" value="EM"/>
    <property type="resolution" value="4.20 A"/>
    <property type="chains" value="C=25-344"/>
</dbReference>
<dbReference type="PDB" id="7TT5">
    <property type="method" value="EM"/>
    <property type="resolution" value="4.30 A"/>
    <property type="chains" value="C=25-344"/>
</dbReference>
<dbReference type="PDB" id="7TT6">
    <property type="method" value="EM"/>
    <property type="resolution" value="4.30 A"/>
    <property type="chains" value="C=25-344"/>
</dbReference>
<dbReference type="PDB" id="7TT7">
    <property type="method" value="EM"/>
    <property type="resolution" value="4.80 A"/>
    <property type="chains" value="C=25-344"/>
</dbReference>
<dbReference type="PDB" id="7TTC">
    <property type="method" value="EM"/>
    <property type="resolution" value="3.60 A"/>
    <property type="chains" value="C=25-344"/>
</dbReference>
<dbReference type="PDB" id="7YE4">
    <property type="method" value="EM"/>
    <property type="resolution" value="3.40 A"/>
    <property type="chains" value="C=1-344"/>
</dbReference>
<dbReference type="PDB" id="7YE6">
    <property type="method" value="EM"/>
    <property type="resolution" value="3.40 A"/>
    <property type="chains" value="C=1-344"/>
</dbReference>
<dbReference type="PDB" id="8ADG">
    <property type="method" value="EM"/>
    <property type="resolution" value="3.00 A"/>
    <property type="chains" value="C=1-344"/>
</dbReference>
<dbReference type="PDB" id="8ADI">
    <property type="method" value="EM"/>
    <property type="resolution" value="3.40 A"/>
    <property type="chains" value="C=1-344"/>
</dbReference>
<dbReference type="PDB" id="8BNZ">
    <property type="method" value="EM"/>
    <property type="resolution" value="3.50 A"/>
    <property type="chains" value="C=1-344"/>
</dbReference>
<dbReference type="PDB" id="8BO2">
    <property type="method" value="EM"/>
    <property type="resolution" value="3.10 A"/>
    <property type="chains" value="C=1-344"/>
</dbReference>
<dbReference type="PDB" id="8BVQ">
    <property type="method" value="EM"/>
    <property type="resolution" value="3.30 A"/>
    <property type="chains" value="C=25-344"/>
</dbReference>
<dbReference type="PDB" id="8BWC">
    <property type="method" value="EM"/>
    <property type="resolution" value="3.50 A"/>
    <property type="chains" value="C=25-344"/>
</dbReference>
<dbReference type="PDB" id="8PZ1">
    <property type="method" value="EM"/>
    <property type="resolution" value="4.10 A"/>
    <property type="chains" value="C=25-344"/>
</dbReference>
<dbReference type="PDB" id="8PZ2">
    <property type="method" value="EM"/>
    <property type="resolution" value="4.20 A"/>
    <property type="chains" value="C=25-344"/>
</dbReference>
<dbReference type="PDB" id="8PZU">
    <property type="method" value="EM"/>
    <property type="resolution" value="3.50 A"/>
    <property type="chains" value="C=25-344"/>
</dbReference>
<dbReference type="PDB" id="8PZV">
    <property type="method" value="EM"/>
    <property type="resolution" value="2.90 A"/>
    <property type="chains" value="C=25-344"/>
</dbReference>
<dbReference type="PDB" id="8Q0G">
    <property type="method" value="EM"/>
    <property type="resolution" value="4.30 A"/>
    <property type="chains" value="C=25-344"/>
</dbReference>
<dbReference type="PDB" id="8QN4">
    <property type="method" value="EM"/>
    <property type="resolution" value="3.36 A"/>
    <property type="chains" value="C=1-344"/>
</dbReference>
<dbReference type="PDB" id="8QP5">
    <property type="method" value="EM"/>
    <property type="resolution" value="4.40 A"/>
    <property type="chains" value="C=25-344"/>
</dbReference>
<dbReference type="PDB" id="8QPU">
    <property type="method" value="EM"/>
    <property type="resolution" value="5.20 A"/>
    <property type="chains" value="C=25-344"/>
</dbReference>
<dbReference type="PDB" id="8QPV">
    <property type="method" value="EM"/>
    <property type="resolution" value="4.00 A"/>
    <property type="chains" value="C=25-344"/>
</dbReference>
<dbReference type="PDB" id="8QPW">
    <property type="method" value="EM"/>
    <property type="resolution" value="5.30 A"/>
    <property type="chains" value="C=25-344"/>
</dbReference>
<dbReference type="PDB" id="8SPR">
    <property type="method" value="EM"/>
    <property type="resolution" value="3.90 A"/>
    <property type="chains" value="C=26-344"/>
</dbReference>
<dbReference type="PDB" id="8SQA">
    <property type="method" value="EM"/>
    <property type="resolution" value="4.20 A"/>
    <property type="chains" value="C=26-344"/>
</dbReference>
<dbReference type="PDB" id="8SQB">
    <property type="method" value="EM"/>
    <property type="resolution" value="3.80 A"/>
    <property type="chains" value="C=26-344"/>
</dbReference>
<dbReference type="PDB" id="9CNW">
    <property type="method" value="EM"/>
    <property type="resolution" value="2.60 A"/>
    <property type="chains" value="C=1-344"/>
</dbReference>
<dbReference type="PDB" id="9CNX">
    <property type="method" value="EM"/>
    <property type="resolution" value="3.55 A"/>
    <property type="chains" value="C=1-344"/>
</dbReference>
<dbReference type="PDB" id="9CNY">
    <property type="method" value="EM"/>
    <property type="resolution" value="4.00 A"/>
    <property type="chains" value="C=1-344"/>
</dbReference>
<dbReference type="PDB" id="9CNZ">
    <property type="method" value="EM"/>
    <property type="resolution" value="3.10 A"/>
    <property type="chains" value="C=1-344"/>
</dbReference>
<dbReference type="PDB" id="9CO0">
    <property type="method" value="EM"/>
    <property type="resolution" value="3.30 A"/>
    <property type="chains" value="C=1-344"/>
</dbReference>
<dbReference type="PDB" id="9HE1">
    <property type="method" value="EM"/>
    <property type="resolution" value="3.00 A"/>
    <property type="chains" value="C=1-344"/>
</dbReference>
<dbReference type="PDBsum" id="2LAE"/>
<dbReference type="PDBsum" id="2LAF"/>
<dbReference type="PDBsum" id="2YH5"/>
<dbReference type="PDBsum" id="2YH6"/>
<dbReference type="PDBsum" id="3SNS"/>
<dbReference type="PDBsum" id="3TGO"/>
<dbReference type="PDBsum" id="5AYW"/>
<dbReference type="PDBsum" id="5D0O"/>
<dbReference type="PDBsum" id="5D0Q"/>
<dbReference type="PDBsum" id="5EKQ"/>
<dbReference type="PDBsum" id="5LJO"/>
<dbReference type="PDBsum" id="6LYQ"/>
<dbReference type="PDBsum" id="6LYR"/>
<dbReference type="PDBsum" id="6LYS"/>
<dbReference type="PDBsum" id="6LYU"/>
<dbReference type="PDBsum" id="6SMX"/>
<dbReference type="PDBsum" id="6SN0"/>
<dbReference type="PDBsum" id="6SN2"/>
<dbReference type="PDBsum" id="6SN3"/>
<dbReference type="PDBsum" id="6SN4"/>
<dbReference type="PDBsum" id="6SN5"/>
<dbReference type="PDBsum" id="6SN7"/>
<dbReference type="PDBsum" id="6SN8"/>
<dbReference type="PDBsum" id="6SN9"/>
<dbReference type="PDBsum" id="6SO7"/>
<dbReference type="PDBsum" id="6SO8"/>
<dbReference type="PDBsum" id="6SOA"/>
<dbReference type="PDBsum" id="6SOB"/>
<dbReference type="PDBsum" id="6SOC"/>
<dbReference type="PDBsum" id="6SOG"/>
<dbReference type="PDBsum" id="6SOH"/>
<dbReference type="PDBsum" id="6SOJ"/>
<dbReference type="PDBsum" id="6V05"/>
<dbReference type="PDBsum" id="7BNQ"/>
<dbReference type="PDBsum" id="7NBX"/>
<dbReference type="PDBsum" id="7NCS"/>
<dbReference type="PDBsum" id="7ND0"/>
<dbReference type="PDBsum" id="7NRI"/>
<dbReference type="PDBsum" id="7R1W"/>
<dbReference type="PDBsum" id="7RI4"/>
<dbReference type="PDBsum" id="7RI5"/>
<dbReference type="PDBsum" id="7RI6"/>
<dbReference type="PDBsum" id="7RI7"/>
<dbReference type="PDBsum" id="7RI9"/>
<dbReference type="PDBsum" id="7RJ5"/>
<dbReference type="PDBsum" id="7TSZ"/>
<dbReference type="PDBsum" id="7TT0"/>
<dbReference type="PDBsum" id="7TT1"/>
<dbReference type="PDBsum" id="7TT2"/>
<dbReference type="PDBsum" id="7TT3"/>
<dbReference type="PDBsum" id="7TT4"/>
<dbReference type="PDBsum" id="7TT5"/>
<dbReference type="PDBsum" id="7TT6"/>
<dbReference type="PDBsum" id="7TT7"/>
<dbReference type="PDBsum" id="7TTC"/>
<dbReference type="PDBsum" id="7YE4"/>
<dbReference type="PDBsum" id="7YE6"/>
<dbReference type="PDBsum" id="8ADG"/>
<dbReference type="PDBsum" id="8ADI"/>
<dbReference type="PDBsum" id="8BNZ"/>
<dbReference type="PDBsum" id="8BO2"/>
<dbReference type="PDBsum" id="8BVQ"/>
<dbReference type="PDBsum" id="8BWC"/>
<dbReference type="PDBsum" id="8PZ1"/>
<dbReference type="PDBsum" id="8PZ2"/>
<dbReference type="PDBsum" id="8PZU"/>
<dbReference type="PDBsum" id="8PZV"/>
<dbReference type="PDBsum" id="8Q0G"/>
<dbReference type="PDBsum" id="8QN4"/>
<dbReference type="PDBsum" id="8QP5"/>
<dbReference type="PDBsum" id="8QPU"/>
<dbReference type="PDBsum" id="8QPV"/>
<dbReference type="PDBsum" id="8QPW"/>
<dbReference type="PDBsum" id="8SPR"/>
<dbReference type="PDBsum" id="8SQA"/>
<dbReference type="PDBsum" id="8SQB"/>
<dbReference type="PDBsum" id="9CNW"/>
<dbReference type="PDBsum" id="9CNX"/>
<dbReference type="PDBsum" id="9CNY"/>
<dbReference type="PDBsum" id="9CNZ"/>
<dbReference type="PDBsum" id="9CO0"/>
<dbReference type="PDBsum" id="9HE1"/>
<dbReference type="BMRB" id="P0A903"/>
<dbReference type="EMDB" id="EMD-12232"/>
<dbReference type="EMDB" id="EMD-12262"/>
<dbReference type="EMDB" id="EMD-12263"/>
<dbReference type="EMDB" id="EMD-12271"/>
<dbReference type="EMDB" id="EMD-12272"/>
<dbReference type="EMDB" id="EMD-12546"/>
<dbReference type="EMDB" id="EMD-14242"/>
<dbReference type="EMDB" id="EMD-15362"/>
<dbReference type="EMDB" id="EMD-15363"/>
<dbReference type="EMDB" id="EMD-16137"/>
<dbReference type="EMDB" id="EMD-16138"/>
<dbReference type="EMDB" id="EMD-16268"/>
<dbReference type="EMDB" id="EMD-18034"/>
<dbReference type="EMDB" id="EMD-18035"/>
<dbReference type="EMDB" id="EMD-18045"/>
<dbReference type="EMDB" id="EMD-18046"/>
<dbReference type="EMDB" id="EMD-18053"/>
<dbReference type="EMDB" id="EMD-18507"/>
<dbReference type="EMDB" id="EMD-18543"/>
<dbReference type="EMDB" id="EMD-18562"/>
<dbReference type="EMDB" id="EMD-18563"/>
<dbReference type="EMDB" id="EMD-18564"/>
<dbReference type="EMDB" id="EMD-30018"/>
<dbReference type="EMDB" id="EMD-33763"/>
<dbReference type="EMDB" id="EMD-33765"/>
<dbReference type="EMDB" id="EMD-4061"/>
<dbReference type="EMDB" id="EMD-40682"/>
<dbReference type="EMDB" id="EMD-52074"/>
<dbReference type="SMR" id="P0A903"/>
<dbReference type="BioGRID" id="4262898">
    <property type="interactions" value="315"/>
</dbReference>
<dbReference type="ComplexPortal" id="CPX-1923">
    <property type="entry name" value="BAM complex"/>
</dbReference>
<dbReference type="DIP" id="DIP-39898N"/>
<dbReference type="FunCoup" id="P0A903">
    <property type="interactions" value="66"/>
</dbReference>
<dbReference type="IntAct" id="P0A903">
    <property type="interactions" value="8"/>
</dbReference>
<dbReference type="STRING" id="511145.b2477"/>
<dbReference type="TCDB" id="1.B.33.1.3">
    <property type="family name" value="the outer membrane protein insertion porin (bam complex) (ompip) family"/>
</dbReference>
<dbReference type="jPOST" id="P0A903"/>
<dbReference type="PaxDb" id="511145-b2477"/>
<dbReference type="DNASU" id="946954"/>
<dbReference type="EnsemblBacteria" id="AAC75530">
    <property type="protein sequence ID" value="AAC75530"/>
    <property type="gene ID" value="b2477"/>
</dbReference>
<dbReference type="GeneID" id="93774661"/>
<dbReference type="GeneID" id="946954"/>
<dbReference type="KEGG" id="ecj:JW2462"/>
<dbReference type="KEGG" id="eco:b2477"/>
<dbReference type="KEGG" id="ecoc:C3026_13750"/>
<dbReference type="PATRIC" id="fig|1411691.4.peg.4262"/>
<dbReference type="EchoBASE" id="EB0652"/>
<dbReference type="eggNOG" id="COG3317">
    <property type="taxonomic scope" value="Bacteria"/>
</dbReference>
<dbReference type="HOGENOM" id="CLU_063217_1_0_6"/>
<dbReference type="InParanoid" id="P0A903"/>
<dbReference type="OMA" id="YNVFMTN"/>
<dbReference type="OrthoDB" id="5686855at2"/>
<dbReference type="PhylomeDB" id="P0A903"/>
<dbReference type="BioCyc" id="EcoCyc:EG10658-MONOMER"/>
<dbReference type="EvolutionaryTrace" id="P0A903"/>
<dbReference type="PRO" id="PR:P0A903"/>
<dbReference type="Proteomes" id="UP000000625">
    <property type="component" value="Chromosome"/>
</dbReference>
<dbReference type="GO" id="GO:1990063">
    <property type="term" value="C:Bam protein complex"/>
    <property type="evidence" value="ECO:0000314"/>
    <property type="project" value="EcoCyc"/>
</dbReference>
<dbReference type="GO" id="GO:0009986">
    <property type="term" value="C:cell surface"/>
    <property type="evidence" value="ECO:0000314"/>
    <property type="project" value="EcoCyc"/>
</dbReference>
<dbReference type="GO" id="GO:0016020">
    <property type="term" value="C:membrane"/>
    <property type="evidence" value="ECO:0000314"/>
    <property type="project" value="ComplexPortal"/>
</dbReference>
<dbReference type="GO" id="GO:0042802">
    <property type="term" value="F:identical protein binding"/>
    <property type="evidence" value="ECO:0000353"/>
    <property type="project" value="IntAct"/>
</dbReference>
<dbReference type="GO" id="GO:0043165">
    <property type="term" value="P:Gram-negative-bacterium-type cell outer membrane assembly"/>
    <property type="evidence" value="ECO:0000314"/>
    <property type="project" value="ComplexPortal"/>
</dbReference>
<dbReference type="GO" id="GO:0051205">
    <property type="term" value="P:protein insertion into membrane"/>
    <property type="evidence" value="ECO:0000314"/>
    <property type="project" value="ComplexPortal"/>
</dbReference>
<dbReference type="DisProt" id="DP01339"/>
<dbReference type="FunFam" id="3.30.310.170:FF:000001">
    <property type="entry name" value="Outer membrane protein assembly factor BamC"/>
    <property type="match status" value="1"/>
</dbReference>
<dbReference type="FunFam" id="3.30.530.50:FF:000001">
    <property type="entry name" value="Outer membrane protein assembly factor BamC"/>
    <property type="match status" value="1"/>
</dbReference>
<dbReference type="Gene3D" id="3.30.530.50">
    <property type="match status" value="1"/>
</dbReference>
<dbReference type="Gene3D" id="3.30.310.170">
    <property type="entry name" value="Outer membrane protein assembly factor BamC"/>
    <property type="match status" value="1"/>
</dbReference>
<dbReference type="HAMAP" id="MF_00924">
    <property type="entry name" value="OM_assembly_BamC"/>
    <property type="match status" value="1"/>
</dbReference>
<dbReference type="InterPro" id="IPR014524">
    <property type="entry name" value="BamC"/>
</dbReference>
<dbReference type="InterPro" id="IPR042268">
    <property type="entry name" value="BamC_C"/>
</dbReference>
<dbReference type="InterPro" id="IPR010653">
    <property type="entry name" value="NlpB/DapX"/>
</dbReference>
<dbReference type="NCBIfam" id="NF008674">
    <property type="entry name" value="PRK11679.1"/>
    <property type="match status" value="1"/>
</dbReference>
<dbReference type="Pfam" id="PF06804">
    <property type="entry name" value="Lipoprotein_18"/>
    <property type="match status" value="1"/>
</dbReference>
<dbReference type="PIRSF" id="PIRSF026343">
    <property type="entry name" value="NlpB"/>
    <property type="match status" value="1"/>
</dbReference>
<dbReference type="PROSITE" id="PS51257">
    <property type="entry name" value="PROKAR_LIPOPROTEIN"/>
    <property type="match status" value="1"/>
</dbReference>
<feature type="signal peptide">
    <location>
        <begin position="1"/>
        <end position="24"/>
    </location>
</feature>
<feature type="chain" id="PRO_0000018027" description="Outer membrane protein assembly factor BamC">
    <location>
        <begin position="25"/>
        <end position="344"/>
    </location>
</feature>
<feature type="lipid moiety-binding region" description="N-palmitoyl cysteine" evidence="1 5 17">
    <location>
        <position position="25"/>
    </location>
</feature>
<feature type="lipid moiety-binding region" description="S-diacylglycerol cysteine" evidence="1 5 17">
    <location>
        <position position="25"/>
    </location>
</feature>
<feature type="sequence conflict" description="In Ref. 2; M33928." evidence="16" ref="2">
    <original>A</original>
    <variation>R</variation>
    <location>
        <position position="219"/>
    </location>
</feature>
<feature type="helix" evidence="32">
    <location>
        <begin position="30"/>
        <end position="33"/>
    </location>
</feature>
<feature type="turn" evidence="33">
    <location>
        <begin position="37"/>
        <end position="39"/>
    </location>
</feature>
<feature type="helix" evidence="32">
    <location>
        <begin position="40"/>
        <end position="43"/>
    </location>
</feature>
<feature type="helix" evidence="36">
    <location>
        <begin position="60"/>
        <end position="62"/>
    </location>
</feature>
<feature type="strand" evidence="35">
    <location>
        <begin position="63"/>
        <end position="65"/>
    </location>
</feature>
<feature type="helix" evidence="32">
    <location>
        <begin position="77"/>
        <end position="79"/>
    </location>
</feature>
<feature type="strand" evidence="32">
    <location>
        <begin position="96"/>
        <end position="100"/>
    </location>
</feature>
<feature type="strand" evidence="31">
    <location>
        <begin position="103"/>
        <end position="108"/>
    </location>
</feature>
<feature type="helix" evidence="29">
    <location>
        <begin position="109"/>
        <end position="112"/>
    </location>
</feature>
<feature type="helix" evidence="31">
    <location>
        <begin position="116"/>
        <end position="126"/>
    </location>
</feature>
<feature type="strand" evidence="31">
    <location>
        <begin position="131"/>
        <end position="135"/>
    </location>
</feature>
<feature type="helix" evidence="31">
    <location>
        <begin position="136"/>
        <end position="138"/>
    </location>
</feature>
<feature type="strand" evidence="31">
    <location>
        <begin position="140"/>
        <end position="143"/>
    </location>
</feature>
<feature type="strand" evidence="31">
    <location>
        <begin position="146"/>
        <end position="148"/>
    </location>
</feature>
<feature type="helix" evidence="31">
    <location>
        <begin position="153"/>
        <end position="155"/>
    </location>
</feature>
<feature type="strand" evidence="31">
    <location>
        <begin position="157"/>
        <end position="168"/>
    </location>
</feature>
<feature type="strand" evidence="31">
    <location>
        <begin position="171"/>
        <end position="183"/>
    </location>
</feature>
<feature type="strand" evidence="31">
    <location>
        <begin position="186"/>
        <end position="188"/>
    </location>
</feature>
<feature type="helix" evidence="31">
    <location>
        <begin position="191"/>
        <end position="208"/>
    </location>
</feature>
<feature type="strand" evidence="30">
    <location>
        <begin position="230"/>
        <end position="234"/>
    </location>
</feature>
<feature type="turn" evidence="34">
    <location>
        <begin position="235"/>
        <end position="237"/>
    </location>
</feature>
<feature type="strand" evidence="30">
    <location>
        <begin position="240"/>
        <end position="246"/>
    </location>
</feature>
<feature type="helix" evidence="30">
    <location>
        <begin position="248"/>
        <end position="261"/>
    </location>
</feature>
<feature type="strand" evidence="30">
    <location>
        <begin position="264"/>
        <end position="270"/>
    </location>
</feature>
<feature type="helix" evidence="30">
    <location>
        <begin position="271"/>
        <end position="273"/>
    </location>
</feature>
<feature type="strand" evidence="30">
    <location>
        <begin position="275"/>
        <end position="280"/>
    </location>
</feature>
<feature type="helix" evidence="30">
    <location>
        <begin position="285"/>
        <end position="291"/>
    </location>
</feature>
<feature type="strand" evidence="30">
    <location>
        <begin position="300"/>
        <end position="310"/>
    </location>
</feature>
<feature type="strand" evidence="30">
    <location>
        <begin position="313"/>
        <end position="319"/>
    </location>
</feature>
<feature type="strand" evidence="34">
    <location>
        <begin position="321"/>
        <end position="323"/>
    </location>
</feature>
<feature type="helix" evidence="30">
    <location>
        <begin position="328"/>
        <end position="344"/>
    </location>
</feature>